<comment type="function">
    <text evidence="4 5 6 8">One of several proteins that assist in the late maturation steps of the functional core of the 30S ribosomal subunit. Helps release RbfA from mature subunits. May play a role in the assembly of ribosomal proteins into the subunit. Circularly permuted GTPase with a low level of activity and slow catalytic turnover, does not act on ATP (PubMed:16485133). GTPase activity is stimulated by the presence of 30S or 70S ribosomes, phosphorylation increases stimulation (PubMed:22544754). Depletion results in increased sensitivity to protein synthesis inhibitors that block the peptide channel or peptidyl transferase center on the ribosome, suggesting this protein functions in conjunction with the ribosome in vivo (PubMed:15828870). Decreasing levels of protein lead to an increase in free 30S and 50S ribosomal subunits and a decrease in assembled 70S ribosomes (PubMed:15828870). Suggested to serve as a specific transcription factor for proteins involved in late stages of peptidoglycan synthesis (PubMed:18344364).</text>
</comment>
<comment type="cofactor">
    <cofactor evidence="1 3">
        <name>Zn(2+)</name>
        <dbReference type="ChEBI" id="CHEBI:29105"/>
    </cofactor>
    <text evidence="1 3">Binds 1 zinc ion per subunit.</text>
</comment>
<comment type="biophysicochemical properties">
    <kinetics>
        <KM evidence="5">30.5 uM for GTP</KM>
        <text evidence="5">kcat for GTP is 13.6 h(-1), in the absence of ribosomes.</text>
    </kinetics>
</comment>
<comment type="subunit">
    <text evidence="5 8 14">Monomer, but able to form dimers (PubMed:16485133). Associates with 30S ribosomal subunit; a phospho-mimetic mutation increases association (PubMed:22544754). Probably binds 16S rRNA.</text>
</comment>
<comment type="subcellular location">
    <subcellularLocation>
        <location evidence="1">Cytoplasm</location>
    </subcellularLocation>
</comment>
<comment type="PTM">
    <text evidence="7 8">In vitro phosphorylated mostly on Thr (with lower signal on Ser) by PrkC in the presence of poly-L-Lys or myelin basic protein, dephosphorylated by PrpC (PubMed:19246764). Most in vitro phosphorylation occurs on Thr-166, in vivo phosphorylation has not been detected, but it might vary during the cell cycle (PubMed:22544754).</text>
</comment>
<comment type="disruption phenotype">
    <text evidence="4 5 6 9">Has been described as essential (PubMed:9743119, PubMed:16485133, PubMed:18344364), but also as non-essential (PubMed:15828870). Cells have a slow growth phenotype (PubMed:15828870, PubMed:16485133, PubMed:18344364, PubMed:22544754). Disrupted strain grows as chains of filaments, a cell curvature phenotype is also present, resulting in long wavy cells or short curved rods (PubMed:15828870, PubMed:22544754). Depleted cells form aberrant, swollen cells (PubMed:16485133, PubMed:18344364). Depleted cells DNA staining shows fragmented and/or disturbed nucleoid segregation; effects are seen most in minimal E-medium (PubMed:16485133). Depleted cells have an irregular deposition of cell wall and 15% have abnormal septal cleavage planes (PubMed:18344364).</text>
</comment>
<comment type="similarity">
    <text evidence="1 13">Belongs to the TRAFAC class YlqF/YawG GTPase family. RsgA subfamily.</text>
</comment>
<protein>
    <recommendedName>
        <fullName evidence="1">Small ribosomal subunit biogenesis GTPase RsgA</fullName>
        <ecNumber evidence="1 5">3.6.1.-</ecNumber>
    </recommendedName>
    <alternativeName>
        <fullName evidence="11">Ribosome-associated GTPase CpgA</fullName>
    </alternativeName>
</protein>
<gene>
    <name evidence="1" type="primary">rsgA</name>
    <name evidence="10" type="synonym">cpgA</name>
    <name type="synonym">engC</name>
    <name evidence="12" type="synonym">yloQ</name>
    <name type="ordered locus">BSU15780</name>
</gene>
<keyword id="KW-0002">3D-structure</keyword>
<keyword id="KW-0963">Cytoplasm</keyword>
<keyword id="KW-0342">GTP-binding</keyword>
<keyword id="KW-0378">Hydrolase</keyword>
<keyword id="KW-0479">Metal-binding</keyword>
<keyword id="KW-0547">Nucleotide-binding</keyword>
<keyword id="KW-0597">Phosphoprotein</keyword>
<keyword id="KW-1185">Reference proteome</keyword>
<keyword id="KW-0690">Ribosome biogenesis</keyword>
<keyword id="KW-0694">RNA-binding</keyword>
<keyword id="KW-0699">rRNA-binding</keyword>
<keyword id="KW-0862">Zinc</keyword>
<reference key="1">
    <citation type="journal article" date="1998" name="Microbiology">
        <title>A 28 kbp segment from the spoVM region of the Bacillus subtilis 168 genome.</title>
        <authorList>
            <person name="Foulger D."/>
            <person name="Errington J."/>
        </authorList>
    </citation>
    <scope>NUCLEOTIDE SEQUENCE [GENOMIC DNA]</scope>
    <source>
        <strain>168</strain>
    </source>
</reference>
<reference key="2">
    <citation type="journal article" date="1997" name="Nature">
        <title>The complete genome sequence of the Gram-positive bacterium Bacillus subtilis.</title>
        <authorList>
            <person name="Kunst F."/>
            <person name="Ogasawara N."/>
            <person name="Moszer I."/>
            <person name="Albertini A.M."/>
            <person name="Alloni G."/>
            <person name="Azevedo V."/>
            <person name="Bertero M.G."/>
            <person name="Bessieres P."/>
            <person name="Bolotin A."/>
            <person name="Borchert S."/>
            <person name="Borriss R."/>
            <person name="Boursier L."/>
            <person name="Brans A."/>
            <person name="Braun M."/>
            <person name="Brignell S.C."/>
            <person name="Bron S."/>
            <person name="Brouillet S."/>
            <person name="Bruschi C.V."/>
            <person name="Caldwell B."/>
            <person name="Capuano V."/>
            <person name="Carter N.M."/>
            <person name="Choi S.-K."/>
            <person name="Codani J.-J."/>
            <person name="Connerton I.F."/>
            <person name="Cummings N.J."/>
            <person name="Daniel R.A."/>
            <person name="Denizot F."/>
            <person name="Devine K.M."/>
            <person name="Duesterhoeft A."/>
            <person name="Ehrlich S.D."/>
            <person name="Emmerson P.T."/>
            <person name="Entian K.-D."/>
            <person name="Errington J."/>
            <person name="Fabret C."/>
            <person name="Ferrari E."/>
            <person name="Foulger D."/>
            <person name="Fritz C."/>
            <person name="Fujita M."/>
            <person name="Fujita Y."/>
            <person name="Fuma S."/>
            <person name="Galizzi A."/>
            <person name="Galleron N."/>
            <person name="Ghim S.-Y."/>
            <person name="Glaser P."/>
            <person name="Goffeau A."/>
            <person name="Golightly E.J."/>
            <person name="Grandi G."/>
            <person name="Guiseppi G."/>
            <person name="Guy B.J."/>
            <person name="Haga K."/>
            <person name="Haiech J."/>
            <person name="Harwood C.R."/>
            <person name="Henaut A."/>
            <person name="Hilbert H."/>
            <person name="Holsappel S."/>
            <person name="Hosono S."/>
            <person name="Hullo M.-F."/>
            <person name="Itaya M."/>
            <person name="Jones L.-M."/>
            <person name="Joris B."/>
            <person name="Karamata D."/>
            <person name="Kasahara Y."/>
            <person name="Klaerr-Blanchard M."/>
            <person name="Klein C."/>
            <person name="Kobayashi Y."/>
            <person name="Koetter P."/>
            <person name="Koningstein G."/>
            <person name="Krogh S."/>
            <person name="Kumano M."/>
            <person name="Kurita K."/>
            <person name="Lapidus A."/>
            <person name="Lardinois S."/>
            <person name="Lauber J."/>
            <person name="Lazarevic V."/>
            <person name="Lee S.-M."/>
            <person name="Levine A."/>
            <person name="Liu H."/>
            <person name="Masuda S."/>
            <person name="Mauel C."/>
            <person name="Medigue C."/>
            <person name="Medina N."/>
            <person name="Mellado R.P."/>
            <person name="Mizuno M."/>
            <person name="Moestl D."/>
            <person name="Nakai S."/>
            <person name="Noback M."/>
            <person name="Noone D."/>
            <person name="O'Reilly M."/>
            <person name="Ogawa K."/>
            <person name="Ogiwara A."/>
            <person name="Oudega B."/>
            <person name="Park S.-H."/>
            <person name="Parro V."/>
            <person name="Pohl T.M."/>
            <person name="Portetelle D."/>
            <person name="Porwollik S."/>
            <person name="Prescott A.M."/>
            <person name="Presecan E."/>
            <person name="Pujic P."/>
            <person name="Purnelle B."/>
            <person name="Rapoport G."/>
            <person name="Rey M."/>
            <person name="Reynolds S."/>
            <person name="Rieger M."/>
            <person name="Rivolta C."/>
            <person name="Rocha E."/>
            <person name="Roche B."/>
            <person name="Rose M."/>
            <person name="Sadaie Y."/>
            <person name="Sato T."/>
            <person name="Scanlan E."/>
            <person name="Schleich S."/>
            <person name="Schroeter R."/>
            <person name="Scoffone F."/>
            <person name="Sekiguchi J."/>
            <person name="Sekowska A."/>
            <person name="Seror S.J."/>
            <person name="Serror P."/>
            <person name="Shin B.-S."/>
            <person name="Soldo B."/>
            <person name="Sorokin A."/>
            <person name="Tacconi E."/>
            <person name="Takagi T."/>
            <person name="Takahashi H."/>
            <person name="Takemaru K."/>
            <person name="Takeuchi M."/>
            <person name="Tamakoshi A."/>
            <person name="Tanaka T."/>
            <person name="Terpstra P."/>
            <person name="Tognoni A."/>
            <person name="Tosato V."/>
            <person name="Uchiyama S."/>
            <person name="Vandenbol M."/>
            <person name="Vannier F."/>
            <person name="Vassarotti A."/>
            <person name="Viari A."/>
            <person name="Wambutt R."/>
            <person name="Wedler E."/>
            <person name="Wedler H."/>
            <person name="Weitzenegger T."/>
            <person name="Winters P."/>
            <person name="Wipat A."/>
            <person name="Yamamoto H."/>
            <person name="Yamane K."/>
            <person name="Yasumoto K."/>
            <person name="Yata K."/>
            <person name="Yoshida K."/>
            <person name="Yoshikawa H.-F."/>
            <person name="Zumstein E."/>
            <person name="Yoshikawa H."/>
            <person name="Danchin A."/>
        </authorList>
    </citation>
    <scope>NUCLEOTIDE SEQUENCE [LARGE SCALE GENOMIC DNA]</scope>
    <source>
        <strain>168</strain>
    </source>
</reference>
<reference key="3">
    <citation type="journal article" date="1998" name="Nat. Biotechnol.">
        <title>A genome-based approach for the identification of essential bacterial genes.</title>
        <authorList>
            <person name="Arigoni F."/>
            <person name="Talabot F."/>
            <person name="Peitsch M.C."/>
            <person name="Edgerton M.D."/>
            <person name="Meldrum E."/>
            <person name="Allet E."/>
            <person name="Fish R."/>
            <person name="Jamotte T."/>
            <person name="Curchod M.-L."/>
            <person name="Loferer H."/>
        </authorList>
    </citation>
    <scope>IDENTIFICATION</scope>
    <scope>DISRUPTION PHENOTYPE</scope>
</reference>
<reference key="4">
    <citation type="journal article" date="2005" name="Biochem. J.">
        <title>Characterization of the Bacillus subtilis GTPase YloQ and its role in ribosome function.</title>
        <authorList>
            <person name="Campbell T.L."/>
            <person name="Daigle D.M."/>
            <person name="Brown E.D."/>
        </authorList>
    </citation>
    <scope>FUNCTION</scope>
    <scope>DISRUPTION PHENOTYPE</scope>
    <scope>CHEMICAL SYNTHETIC LETHALITY</scope>
    <source>
        <strain>168 / EB6</strain>
    </source>
</reference>
<reference key="5">
    <citation type="journal article" date="2006" name="Mol. Genet. Genomics">
        <title>The GTPase, CpgA(YloQ), a putative translation factor, is implicated in morphogenesis in Bacillus subtilis.</title>
        <authorList>
            <person name="Cladiere L."/>
            <person name="Hamze K."/>
            <person name="Madec E."/>
            <person name="Levdikov V.M."/>
            <person name="Wilkinson A.J."/>
            <person name="Holland I.B."/>
            <person name="Seror S.J."/>
        </authorList>
    </citation>
    <scope>FUNCTION AS A GTPASE</scope>
    <scope>BIOPHYSICOCHEMICAL PROPERTIES</scope>
    <scope>SUBUNIT</scope>
    <scope>DISRUPTION PHENOTYPE</scope>
    <scope>MUTAGENESIS OF SER-178</scope>
    <source>
        <strain>168</strain>
    </source>
</reference>
<reference key="6">
    <citation type="journal article" date="2008" name="J. Bacteriol.">
        <title>The GTPase CpgA is implicated in the deposition of the peptidoglycan sacculus in Bacillus subtilis.</title>
        <authorList>
            <person name="Absalon C."/>
            <person name="Hamze K."/>
            <person name="Blanot D."/>
            <person name="Frehel C."/>
            <person name="Carballido-Lopez R."/>
            <person name="Holland B.I."/>
            <person name="van Heijenoort J."/>
            <person name="Seror S.J."/>
        </authorList>
    </citation>
    <scope>FUNCTION</scope>
    <scope>DISRUPTION PHENOTYPE</scope>
    <source>
        <strain>168</strain>
    </source>
</reference>
<reference key="7">
    <citation type="journal article" date="2009" name="Microbiology">
        <title>CpgA, EF-Tu and the stressosome protein YezB are substrates of the Ser/Thr kinase/phosphatase couple, PrkC/PrpC, in Bacillus subtilis.</title>
        <authorList>
            <person name="Absalon C."/>
            <person name="Obuchowski M."/>
            <person name="Madec E."/>
            <person name="Delattre D."/>
            <person name="Holland I.B."/>
            <person name="Seror S.J."/>
        </authorList>
    </citation>
    <scope>PHOSPHORYLATION AT SER AND THR</scope>
    <scope>MUTAGENESIS OF SER-178; THR-192; SER-196; THR-206; THR-222 AND SER-226</scope>
    <source>
        <strain>168</strain>
    </source>
</reference>
<reference key="8">
    <citation type="journal article" date="2012" name="J. Biol. Chem.">
        <title>Phosphorylation of CpgA protein enhances both its GTPase activity and its affinity for ribosome and is crucial for Bacillus subtilis growth and morphology.</title>
        <authorList>
            <person name="Pompeo F."/>
            <person name="Freton C."/>
            <person name="Wicker-Planquart C."/>
            <person name="Grangeasse C."/>
            <person name="Jault J.M."/>
            <person name="Galinier A."/>
        </authorList>
    </citation>
    <scope>FUNCTION</scope>
    <scope>SUBUNIT</scope>
    <scope>PHOSPHORYLATION AT THR-166</scope>
    <scope>DISRUPTION PHENOTYPE</scope>
    <scope>MUTAGENESIS OF THR-166 AND LYS-177</scope>
    <source>
        <strain>168</strain>
    </source>
</reference>
<reference evidence="15" key="9">
    <citation type="journal article" date="2004" name="J. Mol. Biol.">
        <title>The crystal structure of YloQ, a circularly permuted GTPase essential for Bacillus subtilis viability.</title>
        <authorList>
            <person name="Levdikov V.M."/>
            <person name="Blagova E.V."/>
            <person name="Brannigan J.A."/>
            <person name="Cladiere L."/>
            <person name="Antson A.A."/>
            <person name="Isupov M.N."/>
            <person name="Seror S.J."/>
            <person name="Wilkinson A.J."/>
        </authorList>
    </citation>
    <scope>X-RAY CRYSTALLOGRAPHY (1.6 ANGSTROMS) IN COMPLEX WITH ZINC IONS</scope>
    <scope>PROBABLE SUBUNIT</scope>
</reference>
<sequence length="298" mass="33797">MPEGKIIKALSGFYYVLDESEDSDKVIQCRGRGIFRKNKITPLVGDYVVYQAENDKEGYLMEIKERTNELIRPPICNVDQAVLVFSAVQPSFSTALLDRFLVLVEANDIQPIICITKMDLIEDQDTEDTIQAYAEDYRNIGYDVYLTSSKDQDSLADIIPHFQDKTTVFAGQSGVGKSSLLNAISPELGLRTNEISEHLGRGKHTTRHVELIHTSGGLVADTPGFSSLEFTDIEEEELGYTFPDIREKSSSCKFRGCLHLKEPKCAVKQAVEDGELKQYRYDHYVEFMTEIKDRKPRY</sequence>
<accession>O34530</accession>
<name>RSGA_BACSU</name>
<proteinExistence type="evidence at protein level"/>
<organism>
    <name type="scientific">Bacillus subtilis (strain 168)</name>
    <dbReference type="NCBI Taxonomy" id="224308"/>
    <lineage>
        <taxon>Bacteria</taxon>
        <taxon>Bacillati</taxon>
        <taxon>Bacillota</taxon>
        <taxon>Bacilli</taxon>
        <taxon>Bacillales</taxon>
        <taxon>Bacillaceae</taxon>
        <taxon>Bacillus</taxon>
    </lineage>
</organism>
<evidence type="ECO:0000255" key="1">
    <source>
        <dbReference type="HAMAP-Rule" id="MF_01820"/>
    </source>
</evidence>
<evidence type="ECO:0000255" key="2">
    <source>
        <dbReference type="PROSITE-ProRule" id="PRU01058"/>
    </source>
</evidence>
<evidence type="ECO:0000269" key="3">
    <source>
    </source>
</evidence>
<evidence type="ECO:0000269" key="4">
    <source>
    </source>
</evidence>
<evidence type="ECO:0000269" key="5">
    <source>
    </source>
</evidence>
<evidence type="ECO:0000269" key="6">
    <source>
    </source>
</evidence>
<evidence type="ECO:0000269" key="7">
    <source>
    </source>
</evidence>
<evidence type="ECO:0000269" key="8">
    <source>
    </source>
</evidence>
<evidence type="ECO:0000269" key="9">
    <source>
    </source>
</evidence>
<evidence type="ECO:0000303" key="10">
    <source>
    </source>
</evidence>
<evidence type="ECO:0000303" key="11">
    <source>
    </source>
</evidence>
<evidence type="ECO:0000303" key="12">
    <source>
    </source>
</evidence>
<evidence type="ECO:0000305" key="13"/>
<evidence type="ECO:0000305" key="14">
    <source>
    </source>
</evidence>
<evidence type="ECO:0007744" key="15">
    <source>
        <dbReference type="PDB" id="1T9H"/>
    </source>
</evidence>
<evidence type="ECO:0007829" key="16">
    <source>
        <dbReference type="PDB" id="1T9H"/>
    </source>
</evidence>
<feature type="chain" id="PRO_0000171464" description="Small ribosomal subunit biogenesis GTPase RsgA">
    <location>
        <begin position="1"/>
        <end position="298"/>
    </location>
</feature>
<feature type="domain" description="CP-type G" evidence="2">
    <location>
        <begin position="67"/>
        <end position="228"/>
    </location>
</feature>
<feature type="binding site" evidence="1">
    <location>
        <begin position="116"/>
        <end position="119"/>
    </location>
    <ligand>
        <name>GTP</name>
        <dbReference type="ChEBI" id="CHEBI:37565"/>
    </ligand>
</feature>
<feature type="binding site" evidence="1">
    <location>
        <begin position="171"/>
        <end position="179"/>
    </location>
    <ligand>
        <name>GTP</name>
        <dbReference type="ChEBI" id="CHEBI:37565"/>
    </ligand>
</feature>
<feature type="binding site" evidence="1 3">
    <location>
        <position position="252"/>
    </location>
    <ligand>
        <name>Zn(2+)</name>
        <dbReference type="ChEBI" id="CHEBI:29105"/>
    </ligand>
</feature>
<feature type="binding site" evidence="1 3">
    <location>
        <position position="257"/>
    </location>
    <ligand>
        <name>Zn(2+)</name>
        <dbReference type="ChEBI" id="CHEBI:29105"/>
    </ligand>
</feature>
<feature type="binding site" evidence="1 3">
    <location>
        <position position="259"/>
    </location>
    <ligand>
        <name>Zn(2+)</name>
        <dbReference type="ChEBI" id="CHEBI:29105"/>
    </ligand>
</feature>
<feature type="binding site" evidence="1 3">
    <location>
        <position position="265"/>
    </location>
    <ligand>
        <name>Zn(2+)</name>
        <dbReference type="ChEBI" id="CHEBI:29105"/>
    </ligand>
</feature>
<feature type="modified residue" description="Phosphothreonine" evidence="8">
    <location>
        <position position="166"/>
    </location>
</feature>
<feature type="mutagenesis site" description="Loss of most phosphorylation by PrkC, GTPase activity less stimulated by 70S ribosomes than wild-type, decreased association with 30S ribosomal subunit in vitro. Grows slowly, cells have abnormal morphology." evidence="8">
    <original>T</original>
    <variation>A</variation>
    <location>
        <position position="166"/>
    </location>
</feature>
<feature type="mutagenesis site" description="Higher endogenous GTPase activity, GTPase more stimulated by 70S ribosomes than wild-type, increased association with 30S ribosomal subunit in vitro, wild-type behavior in vivo." evidence="8">
    <original>T</original>
    <variation>D</variation>
    <location>
        <position position="166"/>
    </location>
</feature>
<feature type="mutagenesis site" description="Grows slowly, cells have abnormal morphology." evidence="8">
    <original>K</original>
    <variation>A</variation>
    <location>
        <position position="177"/>
    </location>
</feature>
<feature type="mutagenesis site" description="No GTPase activity. Wild-type phosphorylation by PrkC in vitro." evidence="5">
    <original>S</original>
    <variation>A</variation>
    <location>
        <position position="178"/>
    </location>
</feature>
<feature type="mutagenesis site" description="Loss of phosphorylation by PrkC, but PrkC autophosphorylation greatly decreased in vitro." evidence="7">
    <original>T</original>
    <variation>A</variation>
    <location>
        <position position="192"/>
    </location>
</feature>
<feature type="mutagenesis site" description="Wild-type phosphorylation by PrkC in vitro." evidence="7">
    <original>S</original>
    <variation>A</variation>
    <location>
        <position position="196"/>
    </location>
</feature>
<feature type="mutagenesis site" description="Wild-type phosphorylation by PrkC in vitro." evidence="7">
    <original>T</original>
    <variation>A</variation>
    <location>
        <position position="206"/>
    </location>
</feature>
<feature type="mutagenesis site" description="Wild-type phosphorylation by PrkC in vitro." evidence="7">
    <original>T</original>
    <variation>A</variation>
    <location>
        <position position="222"/>
    </location>
</feature>
<feature type="mutagenesis site" description="Loss of phosphorylation by PrkC, but PrkC autophosphorylation considerably decreased in vitro." evidence="7">
    <original>S</original>
    <variation>A</variation>
    <location>
        <position position="226"/>
    </location>
</feature>
<feature type="strand" evidence="16">
    <location>
        <begin position="3"/>
        <end position="10"/>
    </location>
</feature>
<feature type="strand" evidence="16">
    <location>
        <begin position="13"/>
        <end position="18"/>
    </location>
</feature>
<feature type="strand" evidence="16">
    <location>
        <begin position="20"/>
        <end position="23"/>
    </location>
</feature>
<feature type="strand" evidence="16">
    <location>
        <begin position="25"/>
        <end position="31"/>
    </location>
</feature>
<feature type="strand" evidence="16">
    <location>
        <begin position="47"/>
        <end position="51"/>
    </location>
</feature>
<feature type="strand" evidence="16">
    <location>
        <begin position="58"/>
        <end position="63"/>
    </location>
</feature>
<feature type="turn" evidence="16">
    <location>
        <begin position="71"/>
        <end position="74"/>
    </location>
</feature>
<feature type="strand" evidence="16">
    <location>
        <begin position="80"/>
        <end position="87"/>
    </location>
</feature>
<feature type="turn" evidence="16">
    <location>
        <begin position="88"/>
        <end position="91"/>
    </location>
</feature>
<feature type="helix" evidence="16">
    <location>
        <begin position="94"/>
        <end position="105"/>
    </location>
</feature>
<feature type="turn" evidence="16">
    <location>
        <begin position="106"/>
        <end position="108"/>
    </location>
</feature>
<feature type="strand" evidence="16">
    <location>
        <begin position="110"/>
        <end position="116"/>
    </location>
</feature>
<feature type="helix" evidence="16">
    <location>
        <begin position="118"/>
        <end position="120"/>
    </location>
</feature>
<feature type="helix" evidence="16">
    <location>
        <begin position="124"/>
        <end position="140"/>
    </location>
</feature>
<feature type="strand" evidence="16">
    <location>
        <begin position="144"/>
        <end position="146"/>
    </location>
</feature>
<feature type="helix" evidence="16">
    <location>
        <begin position="149"/>
        <end position="152"/>
    </location>
</feature>
<feature type="turn" evidence="16">
    <location>
        <begin position="156"/>
        <end position="158"/>
    </location>
</feature>
<feature type="helix" evidence="16">
    <location>
        <begin position="159"/>
        <end position="162"/>
    </location>
</feature>
<feature type="strand" evidence="16">
    <location>
        <begin position="165"/>
        <end position="172"/>
    </location>
</feature>
<feature type="helix" evidence="16">
    <location>
        <begin position="173"/>
        <end position="184"/>
    </location>
</feature>
<feature type="strand" evidence="16">
    <location>
        <begin position="211"/>
        <end position="214"/>
    </location>
</feature>
<feature type="strand" evidence="16">
    <location>
        <begin position="217"/>
        <end position="222"/>
    </location>
</feature>
<feature type="helix" evidence="16">
    <location>
        <begin position="235"/>
        <end position="238"/>
    </location>
</feature>
<feature type="helix" evidence="16">
    <location>
        <begin position="239"/>
        <end position="241"/>
    </location>
</feature>
<feature type="helix" evidence="16">
    <location>
        <begin position="243"/>
        <end position="248"/>
    </location>
</feature>
<feature type="helix" evidence="16">
    <location>
        <begin position="249"/>
        <end position="251"/>
    </location>
</feature>
<feature type="strand" evidence="16">
    <location>
        <begin position="259"/>
        <end position="261"/>
    </location>
</feature>
<feature type="helix" evidence="16">
    <location>
        <begin position="266"/>
        <end position="272"/>
    </location>
</feature>
<feature type="helix" evidence="16">
    <location>
        <begin position="278"/>
        <end position="292"/>
    </location>
</feature>
<dbReference type="EC" id="3.6.1.-" evidence="1 5"/>
<dbReference type="EMBL" id="Y13937">
    <property type="protein sequence ID" value="CAA74251.1"/>
    <property type="molecule type" value="Genomic_DNA"/>
</dbReference>
<dbReference type="EMBL" id="AL009126">
    <property type="protein sequence ID" value="CAB13451.1"/>
    <property type="molecule type" value="Genomic_DNA"/>
</dbReference>
<dbReference type="PIR" id="A69879">
    <property type="entry name" value="A69879"/>
</dbReference>
<dbReference type="RefSeq" id="NP_389460.1">
    <property type="nucleotide sequence ID" value="NC_000964.3"/>
</dbReference>
<dbReference type="RefSeq" id="WP_003232060.1">
    <property type="nucleotide sequence ID" value="NZ_OZ025638.1"/>
</dbReference>
<dbReference type="PDB" id="1T9H">
    <property type="method" value="X-ray"/>
    <property type="resolution" value="1.60 A"/>
    <property type="chains" value="A=1-298"/>
</dbReference>
<dbReference type="PDBsum" id="1T9H"/>
<dbReference type="SMR" id="O34530"/>
<dbReference type="FunCoup" id="O34530">
    <property type="interactions" value="342"/>
</dbReference>
<dbReference type="STRING" id="224308.BSU15780"/>
<dbReference type="iPTMnet" id="O34530"/>
<dbReference type="jPOST" id="O34530"/>
<dbReference type="PaxDb" id="224308-BSU15780"/>
<dbReference type="EnsemblBacteria" id="CAB13451">
    <property type="protein sequence ID" value="CAB13451"/>
    <property type="gene ID" value="BSU_15780"/>
</dbReference>
<dbReference type="GeneID" id="938451"/>
<dbReference type="KEGG" id="bsu:BSU15780"/>
<dbReference type="PATRIC" id="fig|224308.179.peg.1718"/>
<dbReference type="eggNOG" id="COG1162">
    <property type="taxonomic scope" value="Bacteria"/>
</dbReference>
<dbReference type="InParanoid" id="O34530"/>
<dbReference type="OrthoDB" id="9809485at2"/>
<dbReference type="PhylomeDB" id="O34530"/>
<dbReference type="BioCyc" id="BSUB:BSU15780-MONOMER"/>
<dbReference type="EvolutionaryTrace" id="O34530"/>
<dbReference type="Proteomes" id="UP000001570">
    <property type="component" value="Chromosome"/>
</dbReference>
<dbReference type="GO" id="GO:0005737">
    <property type="term" value="C:cytoplasm"/>
    <property type="evidence" value="ECO:0007669"/>
    <property type="project" value="UniProtKB-SubCell"/>
</dbReference>
<dbReference type="GO" id="GO:0005525">
    <property type="term" value="F:GTP binding"/>
    <property type="evidence" value="ECO:0007669"/>
    <property type="project" value="UniProtKB-UniRule"/>
</dbReference>
<dbReference type="GO" id="GO:0003924">
    <property type="term" value="F:GTPase activity"/>
    <property type="evidence" value="ECO:0007669"/>
    <property type="project" value="UniProtKB-UniRule"/>
</dbReference>
<dbReference type="GO" id="GO:0046872">
    <property type="term" value="F:metal ion binding"/>
    <property type="evidence" value="ECO:0007669"/>
    <property type="project" value="UniProtKB-KW"/>
</dbReference>
<dbReference type="GO" id="GO:0019843">
    <property type="term" value="F:rRNA binding"/>
    <property type="evidence" value="ECO:0007669"/>
    <property type="project" value="UniProtKB-KW"/>
</dbReference>
<dbReference type="GO" id="GO:0042274">
    <property type="term" value="P:ribosomal small subunit biogenesis"/>
    <property type="evidence" value="ECO:0007669"/>
    <property type="project" value="UniProtKB-UniRule"/>
</dbReference>
<dbReference type="CDD" id="cd04466">
    <property type="entry name" value="S1_YloQ_GTPase"/>
    <property type="match status" value="1"/>
</dbReference>
<dbReference type="CDD" id="cd01854">
    <property type="entry name" value="YjeQ_EngC"/>
    <property type="match status" value="1"/>
</dbReference>
<dbReference type="Gene3D" id="2.40.50.140">
    <property type="entry name" value="Nucleic acid-binding proteins"/>
    <property type="match status" value="1"/>
</dbReference>
<dbReference type="Gene3D" id="3.40.50.300">
    <property type="entry name" value="P-loop containing nucleotide triphosphate hydrolases"/>
    <property type="match status" value="1"/>
</dbReference>
<dbReference type="Gene3D" id="1.10.40.50">
    <property type="entry name" value="Probable gtpase engc, domain 3"/>
    <property type="match status" value="1"/>
</dbReference>
<dbReference type="HAMAP" id="MF_01820">
    <property type="entry name" value="GTPase_RsgA"/>
    <property type="match status" value="1"/>
</dbReference>
<dbReference type="InterPro" id="IPR030378">
    <property type="entry name" value="G_CP_dom"/>
</dbReference>
<dbReference type="InterPro" id="IPR012340">
    <property type="entry name" value="NA-bd_OB-fold"/>
</dbReference>
<dbReference type="InterPro" id="IPR027417">
    <property type="entry name" value="P-loop_NTPase"/>
</dbReference>
<dbReference type="InterPro" id="IPR004881">
    <property type="entry name" value="Ribosome_biogen_GTPase_RsgA"/>
</dbReference>
<dbReference type="InterPro" id="IPR010914">
    <property type="entry name" value="RsgA_GTPase_dom"/>
</dbReference>
<dbReference type="InterPro" id="IPR031944">
    <property type="entry name" value="RsgA_N"/>
</dbReference>
<dbReference type="NCBIfam" id="TIGR00157">
    <property type="entry name" value="ribosome small subunit-dependent GTPase A"/>
    <property type="match status" value="1"/>
</dbReference>
<dbReference type="PANTHER" id="PTHR32120">
    <property type="entry name" value="SMALL RIBOSOMAL SUBUNIT BIOGENESIS GTPASE RSGA"/>
    <property type="match status" value="1"/>
</dbReference>
<dbReference type="PANTHER" id="PTHR32120:SF11">
    <property type="entry name" value="SMALL RIBOSOMAL SUBUNIT BIOGENESIS GTPASE RSGA 1, MITOCHONDRIAL-RELATED"/>
    <property type="match status" value="1"/>
</dbReference>
<dbReference type="Pfam" id="PF03193">
    <property type="entry name" value="RsgA_GTPase"/>
    <property type="match status" value="1"/>
</dbReference>
<dbReference type="Pfam" id="PF16745">
    <property type="entry name" value="RsgA_N"/>
    <property type="match status" value="1"/>
</dbReference>
<dbReference type="SUPFAM" id="SSF50249">
    <property type="entry name" value="Nucleic acid-binding proteins"/>
    <property type="match status" value="1"/>
</dbReference>
<dbReference type="SUPFAM" id="SSF52540">
    <property type="entry name" value="P-loop containing nucleoside triphosphate hydrolases"/>
    <property type="match status" value="1"/>
</dbReference>
<dbReference type="PROSITE" id="PS50936">
    <property type="entry name" value="ENGC_GTPASE"/>
    <property type="match status" value="1"/>
</dbReference>
<dbReference type="PROSITE" id="PS51721">
    <property type="entry name" value="G_CP"/>
    <property type="match status" value="1"/>
</dbReference>